<gene>
    <name evidence="2" type="primary">gN</name>
    <name type="ORF">BLRF1</name>
</gene>
<organism>
    <name type="scientific">Epstein-Barr virus (strain GD1)</name>
    <name type="common">HHV-4</name>
    <name type="synonym">Human gammaherpesvirus 4</name>
    <dbReference type="NCBI Taxonomy" id="10376"/>
    <lineage>
        <taxon>Viruses</taxon>
        <taxon>Duplodnaviria</taxon>
        <taxon>Heunggongvirae</taxon>
        <taxon>Peploviricota</taxon>
        <taxon>Herviviricetes</taxon>
        <taxon>Herpesvirales</taxon>
        <taxon>Orthoherpesviridae</taxon>
        <taxon>Gammaherpesvirinae</taxon>
        <taxon>Lymphocryptovirus</taxon>
        <taxon>Lymphocryptovirus humangamma4</taxon>
    </lineage>
</organism>
<proteinExistence type="inferred from homology"/>
<protein>
    <recommendedName>
        <fullName evidence="2">Envelope glycoprotein N</fullName>
    </recommendedName>
</protein>
<name>GN_EBVG</name>
<evidence type="ECO:0000250" key="1">
    <source>
        <dbReference type="UniProtKB" id="P03196"/>
    </source>
</evidence>
<evidence type="ECO:0000255" key="2">
    <source>
        <dbReference type="HAMAP-Rule" id="MF_04037"/>
    </source>
</evidence>
<sequence length="102" mass="10944">MGKVLRKPFAKAVPLLFLAATWLLTGVLPAGASSPTNAAAASLTEAQDQFYSYTCNADTFSPSLTSFASIWALLTLVLVIIASAIYLMYVCFNKFVNTLLTD</sequence>
<keyword id="KW-1015">Disulfide bond</keyword>
<keyword id="KW-1040">Host Golgi apparatus</keyword>
<keyword id="KW-1043">Host membrane</keyword>
<keyword id="KW-0472">Membrane</keyword>
<keyword id="KW-0732">Signal</keyword>
<keyword id="KW-0812">Transmembrane</keyword>
<keyword id="KW-1133">Transmembrane helix</keyword>
<keyword id="KW-0261">Viral envelope protein</keyword>
<keyword id="KW-0946">Virion</keyword>
<accession>P0C6Z4</accession>
<accession>Q777F2</accession>
<dbReference type="EMBL" id="AY961628">
    <property type="protein sequence ID" value="AAY41114.1"/>
    <property type="molecule type" value="Genomic_DNA"/>
</dbReference>
<dbReference type="RefSeq" id="YP_401665.1">
    <property type="nucleotide sequence ID" value="NC_007605.1"/>
</dbReference>
<dbReference type="SMR" id="P0C6Z4"/>
<dbReference type="BioGRID" id="971758">
    <property type="interactions" value="1"/>
</dbReference>
<dbReference type="IntAct" id="P0C6Z4">
    <property type="interactions" value="3"/>
</dbReference>
<dbReference type="DNASU" id="3783716"/>
<dbReference type="GeneID" id="3783716"/>
<dbReference type="KEGG" id="vg:3783716"/>
<dbReference type="Proteomes" id="UP000007641">
    <property type="component" value="Genome"/>
</dbReference>
<dbReference type="GO" id="GO:0044177">
    <property type="term" value="C:host cell Golgi apparatus"/>
    <property type="evidence" value="ECO:0007669"/>
    <property type="project" value="UniProtKB-SubCell"/>
</dbReference>
<dbReference type="GO" id="GO:0033644">
    <property type="term" value="C:host cell membrane"/>
    <property type="evidence" value="ECO:0007669"/>
    <property type="project" value="UniProtKB-SubCell"/>
</dbReference>
<dbReference type="GO" id="GO:0016020">
    <property type="term" value="C:membrane"/>
    <property type="evidence" value="ECO:0007669"/>
    <property type="project" value="UniProtKB-KW"/>
</dbReference>
<dbReference type="GO" id="GO:0019031">
    <property type="term" value="C:viral envelope"/>
    <property type="evidence" value="ECO:0007669"/>
    <property type="project" value="UniProtKB-KW"/>
</dbReference>
<dbReference type="GO" id="GO:0055036">
    <property type="term" value="C:virion membrane"/>
    <property type="evidence" value="ECO:0007669"/>
    <property type="project" value="UniProtKB-SubCell"/>
</dbReference>
<dbReference type="HAMAP" id="MF_04037">
    <property type="entry name" value="HSV_GN"/>
    <property type="match status" value="1"/>
</dbReference>
<dbReference type="InterPro" id="IPR005211">
    <property type="entry name" value="Herpes_glycoprotein_N_domain"/>
</dbReference>
<dbReference type="InterPro" id="IPR034707">
    <property type="entry name" value="HSV_GN"/>
</dbReference>
<dbReference type="Pfam" id="PF03554">
    <property type="entry name" value="Herpes_UL73"/>
    <property type="match status" value="1"/>
</dbReference>
<reference key="1">
    <citation type="journal article" date="2005" name="J. Virol.">
        <title>Genomic sequence analysis of Epstein-Barr virus strain GD1 from a nasopharyngeal carcinoma patient.</title>
        <authorList>
            <person name="Zeng M.-S."/>
            <person name="Li D.-J."/>
            <person name="Liu Q.-L."/>
            <person name="Song L.-B."/>
            <person name="Li M.-Z."/>
            <person name="Zhang R.-H."/>
            <person name="Yu X.-J."/>
            <person name="Wang H.-M."/>
            <person name="Ernberg I."/>
            <person name="Zeng Y.-X."/>
        </authorList>
    </citation>
    <scope>NUCLEOTIDE SEQUENCE [LARGE SCALE GENOMIC DNA]</scope>
</reference>
<organismHost>
    <name type="scientific">Homo sapiens</name>
    <name type="common">Human</name>
    <dbReference type="NCBI Taxonomy" id="9606"/>
</organismHost>
<comment type="function">
    <text evidence="2">Envelope glycoprotein necessary for proper maturation of gM and modulation of its membrane fusion activity. Also plays a critical role in virion morphogenesis.</text>
</comment>
<comment type="subunit">
    <text evidence="2">Interacts (via N-terminus) with gM (via N-terminus). The gM-gN heterodimer forms the gCII complex.</text>
</comment>
<comment type="subcellular location">
    <subcellularLocation>
        <location evidence="2">Virion membrane</location>
        <topology evidence="2">Single-pass type I membrane protein</topology>
    </subcellularLocation>
    <subcellularLocation>
        <location evidence="2">Host membrane</location>
        <topology evidence="2">Single-pass type I membrane protein</topology>
    </subcellularLocation>
    <subcellularLocation>
        <location evidence="2">Host Golgi apparatus</location>
        <location evidence="2">Host trans-Golgi network</location>
    </subcellularLocation>
    <text evidence="2">When coexpressed with gM, localizes in the host trans-Golgi network.</text>
</comment>
<comment type="PTM">
    <text evidence="1">O-glycosylated. Contains alpha 2,6-sialic acid residues.</text>
</comment>
<comment type="similarity">
    <text evidence="2">Belongs to the herpesviridae glycoprotein N family.</text>
</comment>
<feature type="signal peptide" evidence="2">
    <location>
        <begin position="1"/>
        <end position="32"/>
    </location>
</feature>
<feature type="chain" id="PRO_0000375952" description="Envelope glycoprotein N" evidence="2">
    <location>
        <begin position="33"/>
        <end position="102"/>
    </location>
</feature>
<feature type="topological domain" description="Virion surface" evidence="2">
    <location>
        <begin position="33"/>
        <end position="69"/>
    </location>
</feature>
<feature type="transmembrane region" description="Helical" evidence="2">
    <location>
        <begin position="70"/>
        <end position="90"/>
    </location>
</feature>
<feature type="topological domain" description="Intravirion" evidence="2">
    <location>
        <begin position="91"/>
        <end position="102"/>
    </location>
</feature>
<feature type="disulfide bond" description="Interchain (with gM)" evidence="2">
    <location>
        <position position="55"/>
    </location>
</feature>